<dbReference type="EMBL" id="AE016795">
    <property type="protein sequence ID" value="AAO09720.1"/>
    <property type="molecule type" value="Genomic_DNA"/>
</dbReference>
<dbReference type="RefSeq" id="WP_011079249.1">
    <property type="nucleotide sequence ID" value="NC_004459.3"/>
</dbReference>
<dbReference type="SMR" id="Q8DCX6"/>
<dbReference type="KEGG" id="vvu:VV1_1264"/>
<dbReference type="HOGENOM" id="CLU_074944_0_0_6"/>
<dbReference type="UniPathway" id="UPA00345"/>
<dbReference type="Proteomes" id="UP000002275">
    <property type="component" value="Chromosome 1"/>
</dbReference>
<dbReference type="GO" id="GO:0005737">
    <property type="term" value="C:cytoplasm"/>
    <property type="evidence" value="ECO:0007669"/>
    <property type="project" value="UniProtKB-SubCell"/>
</dbReference>
<dbReference type="GO" id="GO:0003746">
    <property type="term" value="F:translation elongation factor activity"/>
    <property type="evidence" value="ECO:0007669"/>
    <property type="project" value="UniProtKB-UniRule"/>
</dbReference>
<dbReference type="GO" id="GO:0043043">
    <property type="term" value="P:peptide biosynthetic process"/>
    <property type="evidence" value="ECO:0007669"/>
    <property type="project" value="InterPro"/>
</dbReference>
<dbReference type="CDD" id="cd04470">
    <property type="entry name" value="S1_EF-P_repeat_1"/>
    <property type="match status" value="1"/>
</dbReference>
<dbReference type="CDD" id="cd05794">
    <property type="entry name" value="S1_EF-P_repeat_2"/>
    <property type="match status" value="1"/>
</dbReference>
<dbReference type="FunFam" id="2.30.30.30:FF:000003">
    <property type="entry name" value="Elongation factor P"/>
    <property type="match status" value="1"/>
</dbReference>
<dbReference type="FunFam" id="2.40.50.140:FF:000004">
    <property type="entry name" value="Elongation factor P"/>
    <property type="match status" value="1"/>
</dbReference>
<dbReference type="FunFam" id="2.40.50.140:FF:000009">
    <property type="entry name" value="Elongation factor P"/>
    <property type="match status" value="1"/>
</dbReference>
<dbReference type="Gene3D" id="2.30.30.30">
    <property type="match status" value="1"/>
</dbReference>
<dbReference type="Gene3D" id="2.40.50.140">
    <property type="entry name" value="Nucleic acid-binding proteins"/>
    <property type="match status" value="2"/>
</dbReference>
<dbReference type="HAMAP" id="MF_00141">
    <property type="entry name" value="EF_P"/>
    <property type="match status" value="1"/>
</dbReference>
<dbReference type="InterPro" id="IPR015365">
    <property type="entry name" value="Elong-fact-P_C"/>
</dbReference>
<dbReference type="InterPro" id="IPR012340">
    <property type="entry name" value="NA-bd_OB-fold"/>
</dbReference>
<dbReference type="InterPro" id="IPR014722">
    <property type="entry name" value="Rib_uL2_dom2"/>
</dbReference>
<dbReference type="InterPro" id="IPR020599">
    <property type="entry name" value="Transl_elong_fac_P/YeiP"/>
</dbReference>
<dbReference type="InterPro" id="IPR013185">
    <property type="entry name" value="Transl_elong_KOW-like"/>
</dbReference>
<dbReference type="InterPro" id="IPR001059">
    <property type="entry name" value="Transl_elong_P/YeiP_cen"/>
</dbReference>
<dbReference type="InterPro" id="IPR013852">
    <property type="entry name" value="Transl_elong_P/YeiP_CS"/>
</dbReference>
<dbReference type="InterPro" id="IPR011768">
    <property type="entry name" value="Transl_elongation_fac_P"/>
</dbReference>
<dbReference type="InterPro" id="IPR008991">
    <property type="entry name" value="Translation_prot_SH3-like_sf"/>
</dbReference>
<dbReference type="NCBIfam" id="TIGR00038">
    <property type="entry name" value="efp"/>
    <property type="match status" value="1"/>
</dbReference>
<dbReference type="NCBIfam" id="NF001810">
    <property type="entry name" value="PRK00529.1"/>
    <property type="match status" value="1"/>
</dbReference>
<dbReference type="PANTHER" id="PTHR30053">
    <property type="entry name" value="ELONGATION FACTOR P"/>
    <property type="match status" value="1"/>
</dbReference>
<dbReference type="PANTHER" id="PTHR30053:SF12">
    <property type="entry name" value="ELONGATION FACTOR P (EF-P) FAMILY PROTEIN"/>
    <property type="match status" value="1"/>
</dbReference>
<dbReference type="Pfam" id="PF01132">
    <property type="entry name" value="EFP"/>
    <property type="match status" value="1"/>
</dbReference>
<dbReference type="Pfam" id="PF08207">
    <property type="entry name" value="EFP_N"/>
    <property type="match status" value="1"/>
</dbReference>
<dbReference type="Pfam" id="PF09285">
    <property type="entry name" value="Elong-fact-P_C"/>
    <property type="match status" value="1"/>
</dbReference>
<dbReference type="PIRSF" id="PIRSF005901">
    <property type="entry name" value="EF-P"/>
    <property type="match status" value="1"/>
</dbReference>
<dbReference type="SMART" id="SM01185">
    <property type="entry name" value="EFP"/>
    <property type="match status" value="1"/>
</dbReference>
<dbReference type="SMART" id="SM00841">
    <property type="entry name" value="Elong-fact-P_C"/>
    <property type="match status" value="1"/>
</dbReference>
<dbReference type="SUPFAM" id="SSF50249">
    <property type="entry name" value="Nucleic acid-binding proteins"/>
    <property type="match status" value="2"/>
</dbReference>
<dbReference type="SUPFAM" id="SSF50104">
    <property type="entry name" value="Translation proteins SH3-like domain"/>
    <property type="match status" value="1"/>
</dbReference>
<dbReference type="PROSITE" id="PS01275">
    <property type="entry name" value="EFP"/>
    <property type="match status" value="1"/>
</dbReference>
<protein>
    <recommendedName>
        <fullName evidence="1">Elongation factor P</fullName>
        <shortName evidence="1">EF-P</shortName>
    </recommendedName>
</protein>
<gene>
    <name evidence="1" type="primary">efp</name>
    <name type="ordered locus">VV1_1264</name>
</gene>
<reference key="1">
    <citation type="submission" date="2002-12" db="EMBL/GenBank/DDBJ databases">
        <title>Complete genome sequence of Vibrio vulnificus CMCP6.</title>
        <authorList>
            <person name="Rhee J.H."/>
            <person name="Kim S.Y."/>
            <person name="Chung S.S."/>
            <person name="Kim J.J."/>
            <person name="Moon Y.H."/>
            <person name="Jeong H."/>
            <person name="Choy H.E."/>
        </authorList>
    </citation>
    <scope>NUCLEOTIDE SEQUENCE [LARGE SCALE GENOMIC DNA]</scope>
    <source>
        <strain>CMCP6</strain>
    </source>
</reference>
<sequence length="188" mass="20671">MATVSTNEFKGGLKLMIDSEPCVILENEYVKPGKGQAFNRVKIRKLLSGKVLEKTFKSGDTCEVADVMDIDLDYLYSDGEFYHFMNNETFEQIAADAKAVGENVKWLVENNTCMLTLWNGNPIAVTPPNFVELEVIETDPGLKGDTQGTGGKPATLSTGAVVRVPLFIQIGEVIKVDTRSSEYVGRVK</sequence>
<organism>
    <name type="scientific">Vibrio vulnificus (strain CMCP6)</name>
    <dbReference type="NCBI Taxonomy" id="216895"/>
    <lineage>
        <taxon>Bacteria</taxon>
        <taxon>Pseudomonadati</taxon>
        <taxon>Pseudomonadota</taxon>
        <taxon>Gammaproteobacteria</taxon>
        <taxon>Vibrionales</taxon>
        <taxon>Vibrionaceae</taxon>
        <taxon>Vibrio</taxon>
    </lineage>
</organism>
<feature type="chain" id="PRO_0000094367" description="Elongation factor P">
    <location>
        <begin position="1"/>
        <end position="188"/>
    </location>
</feature>
<feature type="modified residue" description="N6-(3,6-diaminohexanoyl)-5-hydroxylysine" evidence="1">
    <location>
        <position position="34"/>
    </location>
</feature>
<proteinExistence type="inferred from homology"/>
<name>EFP_VIBVU</name>
<comment type="function">
    <text evidence="1">Involved in peptide bond synthesis. Alleviates ribosome stalling that occurs when 3 or more consecutive Pro residues or the sequence PPG is present in a protein, possibly by augmenting the peptidyl transferase activity of the ribosome. Modification of Lys-34 is required for alleviation.</text>
</comment>
<comment type="pathway">
    <text evidence="1">Protein biosynthesis; polypeptide chain elongation.</text>
</comment>
<comment type="subcellular location">
    <subcellularLocation>
        <location evidence="1">Cytoplasm</location>
    </subcellularLocation>
</comment>
<comment type="PTM">
    <text evidence="1">May be beta-lysylated on the epsilon-amino group of Lys-34 by the combined action of EpmA and EpmB, and then hydroxylated on the C5 position of the same residue by EpmC (if this protein is present). Lysylation is critical for the stimulatory effect of EF-P on peptide-bond formation. The lysylation moiety may extend toward the peptidyltransferase center and stabilize the terminal 3-CCA end of the tRNA. Hydroxylation of the C5 position on Lys-34 may allow additional potential stabilizing hydrogen-bond interactions with the P-tRNA.</text>
</comment>
<comment type="similarity">
    <text evidence="1">Belongs to the elongation factor P family.</text>
</comment>
<accession>Q8DCX6</accession>
<keyword id="KW-0963">Cytoplasm</keyword>
<keyword id="KW-0251">Elongation factor</keyword>
<keyword id="KW-0379">Hydroxylation</keyword>
<keyword id="KW-0648">Protein biosynthesis</keyword>
<evidence type="ECO:0000255" key="1">
    <source>
        <dbReference type="HAMAP-Rule" id="MF_00141"/>
    </source>
</evidence>